<accession>A9C3G0</accession>
<feature type="chain" id="PRO_1000131838" description="Probable Fe(2+)-trafficking protein">
    <location>
        <begin position="1"/>
        <end position="90"/>
    </location>
</feature>
<proteinExistence type="inferred from homology"/>
<evidence type="ECO:0000255" key="1">
    <source>
        <dbReference type="HAMAP-Rule" id="MF_00686"/>
    </source>
</evidence>
<name>FETP_DELAS</name>
<keyword id="KW-0408">Iron</keyword>
<keyword id="KW-1185">Reference proteome</keyword>
<gene>
    <name type="ordered locus">Daci_4642</name>
</gene>
<protein>
    <recommendedName>
        <fullName evidence="1">Probable Fe(2+)-trafficking protein</fullName>
    </recommendedName>
</protein>
<reference key="1">
    <citation type="submission" date="2007-11" db="EMBL/GenBank/DDBJ databases">
        <title>Complete sequence of Delftia acidovorans DSM 14801 / SPH-1.</title>
        <authorList>
            <person name="Copeland A."/>
            <person name="Lucas S."/>
            <person name="Lapidus A."/>
            <person name="Barry K."/>
            <person name="Glavina del Rio T."/>
            <person name="Dalin E."/>
            <person name="Tice H."/>
            <person name="Pitluck S."/>
            <person name="Lowry S."/>
            <person name="Clum A."/>
            <person name="Schmutz J."/>
            <person name="Larimer F."/>
            <person name="Land M."/>
            <person name="Hauser L."/>
            <person name="Kyrpides N."/>
            <person name="Kim E."/>
            <person name="Schleheck D."/>
            <person name="Richardson P."/>
        </authorList>
    </citation>
    <scope>NUCLEOTIDE SEQUENCE [LARGE SCALE GENOMIC DNA]</scope>
    <source>
        <strain>DSM 14801 / SPH-1</strain>
    </source>
</reference>
<dbReference type="EMBL" id="CP000884">
    <property type="protein sequence ID" value="ABX37271.1"/>
    <property type="molecule type" value="Genomic_DNA"/>
</dbReference>
<dbReference type="RefSeq" id="WP_012206441.1">
    <property type="nucleotide sequence ID" value="NC_010002.1"/>
</dbReference>
<dbReference type="SMR" id="A9C3G0"/>
<dbReference type="STRING" id="398578.Daci_4642"/>
<dbReference type="KEGG" id="dac:Daci_4642"/>
<dbReference type="eggNOG" id="COG2924">
    <property type="taxonomic scope" value="Bacteria"/>
</dbReference>
<dbReference type="HOGENOM" id="CLU_170994_0_0_4"/>
<dbReference type="Proteomes" id="UP000000784">
    <property type="component" value="Chromosome"/>
</dbReference>
<dbReference type="GO" id="GO:0005829">
    <property type="term" value="C:cytosol"/>
    <property type="evidence" value="ECO:0007669"/>
    <property type="project" value="TreeGrafter"/>
</dbReference>
<dbReference type="GO" id="GO:0005506">
    <property type="term" value="F:iron ion binding"/>
    <property type="evidence" value="ECO:0007669"/>
    <property type="project" value="UniProtKB-UniRule"/>
</dbReference>
<dbReference type="GO" id="GO:0034599">
    <property type="term" value="P:cellular response to oxidative stress"/>
    <property type="evidence" value="ECO:0007669"/>
    <property type="project" value="TreeGrafter"/>
</dbReference>
<dbReference type="FunFam" id="1.10.3880.10:FF:000001">
    <property type="entry name" value="Probable Fe(2+)-trafficking protein"/>
    <property type="match status" value="1"/>
</dbReference>
<dbReference type="Gene3D" id="1.10.3880.10">
    <property type="entry name" value="Fe(II) trafficking protein YggX"/>
    <property type="match status" value="1"/>
</dbReference>
<dbReference type="HAMAP" id="MF_00686">
    <property type="entry name" value="Fe_traffic_YggX"/>
    <property type="match status" value="1"/>
</dbReference>
<dbReference type="InterPro" id="IPR007457">
    <property type="entry name" value="Fe_traffick_prot_YggX"/>
</dbReference>
<dbReference type="InterPro" id="IPR036766">
    <property type="entry name" value="Fe_traffick_prot_YggX_sf"/>
</dbReference>
<dbReference type="NCBIfam" id="NF003817">
    <property type="entry name" value="PRK05408.1"/>
    <property type="match status" value="1"/>
</dbReference>
<dbReference type="PANTHER" id="PTHR36965">
    <property type="entry name" value="FE(2+)-TRAFFICKING PROTEIN-RELATED"/>
    <property type="match status" value="1"/>
</dbReference>
<dbReference type="PANTHER" id="PTHR36965:SF1">
    <property type="entry name" value="FE(2+)-TRAFFICKING PROTEIN-RELATED"/>
    <property type="match status" value="1"/>
</dbReference>
<dbReference type="Pfam" id="PF04362">
    <property type="entry name" value="Iron_traffic"/>
    <property type="match status" value="1"/>
</dbReference>
<dbReference type="PIRSF" id="PIRSF029827">
    <property type="entry name" value="Fe_traffic_YggX"/>
    <property type="match status" value="1"/>
</dbReference>
<dbReference type="SUPFAM" id="SSF111148">
    <property type="entry name" value="YggX-like"/>
    <property type="match status" value="1"/>
</dbReference>
<organism>
    <name type="scientific">Delftia acidovorans (strain DSM 14801 / SPH-1)</name>
    <dbReference type="NCBI Taxonomy" id="398578"/>
    <lineage>
        <taxon>Bacteria</taxon>
        <taxon>Pseudomonadati</taxon>
        <taxon>Pseudomonadota</taxon>
        <taxon>Betaproteobacteria</taxon>
        <taxon>Burkholderiales</taxon>
        <taxon>Comamonadaceae</taxon>
        <taxon>Delftia</taxon>
    </lineage>
</organism>
<sequence length="90" mass="9957">MARTVHCIKLGVDAEGLDFPPYPGELGKRIFEGVSKQAWADWLKHQTMLVNENRLNLADARARQYLARQMENHFFGGGADAAAGYVPPTA</sequence>
<comment type="function">
    <text evidence="1">Could be a mediator in iron transactions between iron acquisition and iron-requiring processes, such as synthesis and/or repair of Fe-S clusters in biosynthetic enzymes.</text>
</comment>
<comment type="similarity">
    <text evidence="1">Belongs to the Fe(2+)-trafficking protein family.</text>
</comment>